<sequence>MADPARAAKLAQRIKVVVAEALGRKVKDPRLEGITVTDARVTNDLQHATIYYTVFGDQVVQADAAKGLEKAKGVLRQEVGRNITVRLTPTLEFVADQIPVNASNLEELLRAAKKRDAEVAALAAGAKHAGDADPYKSDIPEDVEIDEDDFDEEDEDLIDDEELDEDGNK</sequence>
<keyword id="KW-0963">Cytoplasm</keyword>
<keyword id="KW-1185">Reference proteome</keyword>
<keyword id="KW-0690">Ribosome biogenesis</keyword>
<comment type="function">
    <text evidence="1">One of several proteins that assist in the late maturation steps of the functional core of the 30S ribosomal subunit. Associates with free 30S ribosomal subunits (but not with 30S subunits that are part of 70S ribosomes or polysomes). Required for efficient processing of 16S rRNA. May interact with the 5'-terminal helix region of 16S rRNA.</text>
</comment>
<comment type="subunit">
    <text evidence="1">Monomer. Binds 30S ribosomal subunits, but not 50S ribosomal subunits or 70S ribosomes.</text>
</comment>
<comment type="subcellular location">
    <subcellularLocation>
        <location evidence="1">Cytoplasm</location>
    </subcellularLocation>
</comment>
<comment type="similarity">
    <text evidence="1">Belongs to the RbfA family.</text>
</comment>
<feature type="chain" id="PRO_1000000069" description="Ribosome-binding factor A">
    <location>
        <begin position="1"/>
        <end position="169"/>
    </location>
</feature>
<feature type="region of interest" description="Disordered" evidence="2">
    <location>
        <begin position="124"/>
        <end position="169"/>
    </location>
</feature>
<feature type="compositionally biased region" description="Basic and acidic residues" evidence="2">
    <location>
        <begin position="128"/>
        <end position="139"/>
    </location>
</feature>
<feature type="compositionally biased region" description="Acidic residues" evidence="2">
    <location>
        <begin position="140"/>
        <end position="169"/>
    </location>
</feature>
<gene>
    <name evidence="1" type="primary">rbfA</name>
    <name type="ordered locus">Arth_1417</name>
</gene>
<organism>
    <name type="scientific">Arthrobacter sp. (strain FB24)</name>
    <dbReference type="NCBI Taxonomy" id="290399"/>
    <lineage>
        <taxon>Bacteria</taxon>
        <taxon>Bacillati</taxon>
        <taxon>Actinomycetota</taxon>
        <taxon>Actinomycetes</taxon>
        <taxon>Micrococcales</taxon>
        <taxon>Micrococcaceae</taxon>
        <taxon>Arthrobacter</taxon>
    </lineage>
</organism>
<dbReference type="EMBL" id="CP000454">
    <property type="protein sequence ID" value="ABK02811.1"/>
    <property type="molecule type" value="Genomic_DNA"/>
</dbReference>
<dbReference type="RefSeq" id="WP_011691278.1">
    <property type="nucleotide sequence ID" value="NC_008541.1"/>
</dbReference>
<dbReference type="SMR" id="A0JUU1"/>
<dbReference type="STRING" id="290399.Arth_1417"/>
<dbReference type="KEGG" id="art:Arth_1417"/>
<dbReference type="eggNOG" id="COG0858">
    <property type="taxonomic scope" value="Bacteria"/>
</dbReference>
<dbReference type="HOGENOM" id="CLU_089475_0_0_11"/>
<dbReference type="OrthoDB" id="307788at2"/>
<dbReference type="Proteomes" id="UP000000754">
    <property type="component" value="Chromosome"/>
</dbReference>
<dbReference type="GO" id="GO:0005829">
    <property type="term" value="C:cytosol"/>
    <property type="evidence" value="ECO:0007669"/>
    <property type="project" value="TreeGrafter"/>
</dbReference>
<dbReference type="GO" id="GO:0043024">
    <property type="term" value="F:ribosomal small subunit binding"/>
    <property type="evidence" value="ECO:0007669"/>
    <property type="project" value="TreeGrafter"/>
</dbReference>
<dbReference type="GO" id="GO:0030490">
    <property type="term" value="P:maturation of SSU-rRNA"/>
    <property type="evidence" value="ECO:0007669"/>
    <property type="project" value="UniProtKB-UniRule"/>
</dbReference>
<dbReference type="Gene3D" id="3.30.300.20">
    <property type="match status" value="1"/>
</dbReference>
<dbReference type="HAMAP" id="MF_00003">
    <property type="entry name" value="RbfA"/>
    <property type="match status" value="1"/>
</dbReference>
<dbReference type="InterPro" id="IPR015946">
    <property type="entry name" value="KH_dom-like_a/b"/>
</dbReference>
<dbReference type="InterPro" id="IPR000238">
    <property type="entry name" value="RbfA"/>
</dbReference>
<dbReference type="InterPro" id="IPR023799">
    <property type="entry name" value="RbfA_dom_sf"/>
</dbReference>
<dbReference type="InterPro" id="IPR020053">
    <property type="entry name" value="Ribosome-bd_factorA_CS"/>
</dbReference>
<dbReference type="NCBIfam" id="TIGR00082">
    <property type="entry name" value="rbfA"/>
    <property type="match status" value="1"/>
</dbReference>
<dbReference type="PANTHER" id="PTHR33515">
    <property type="entry name" value="RIBOSOME-BINDING FACTOR A, CHLOROPLASTIC-RELATED"/>
    <property type="match status" value="1"/>
</dbReference>
<dbReference type="PANTHER" id="PTHR33515:SF1">
    <property type="entry name" value="RIBOSOME-BINDING FACTOR A, CHLOROPLASTIC-RELATED"/>
    <property type="match status" value="1"/>
</dbReference>
<dbReference type="Pfam" id="PF02033">
    <property type="entry name" value="RBFA"/>
    <property type="match status" value="1"/>
</dbReference>
<dbReference type="SUPFAM" id="SSF89919">
    <property type="entry name" value="Ribosome-binding factor A, RbfA"/>
    <property type="match status" value="1"/>
</dbReference>
<dbReference type="PROSITE" id="PS01319">
    <property type="entry name" value="RBFA"/>
    <property type="match status" value="1"/>
</dbReference>
<reference key="1">
    <citation type="journal article" date="2013" name="Stand. Genomic Sci.">
        <title>Complete genome sequence of Arthrobacter sp. strain FB24.</title>
        <authorList>
            <person name="Nakatsu C.H."/>
            <person name="Barabote R."/>
            <person name="Thompson S."/>
            <person name="Bruce D."/>
            <person name="Detter C."/>
            <person name="Brettin T."/>
            <person name="Han C."/>
            <person name="Beasley F."/>
            <person name="Chen W."/>
            <person name="Konopka A."/>
            <person name="Xie G."/>
        </authorList>
    </citation>
    <scope>NUCLEOTIDE SEQUENCE [LARGE SCALE GENOMIC DNA]</scope>
    <source>
        <strain>FB24</strain>
    </source>
</reference>
<proteinExistence type="inferred from homology"/>
<protein>
    <recommendedName>
        <fullName evidence="1">Ribosome-binding factor A</fullName>
    </recommendedName>
</protein>
<accession>A0JUU1</accession>
<evidence type="ECO:0000255" key="1">
    <source>
        <dbReference type="HAMAP-Rule" id="MF_00003"/>
    </source>
</evidence>
<evidence type="ECO:0000256" key="2">
    <source>
        <dbReference type="SAM" id="MobiDB-lite"/>
    </source>
</evidence>
<name>RBFA_ARTS2</name>